<accession>A4RGE6</accession>
<accession>G4NEQ7</accession>
<sequence length="819" mass="86831">MGNSHTKEARDPNAPLSPHDPRSHASGHHASGSSSSRPRNRASRSDLGGLFGISAGSSSSTQPPYERRETKQEREARKLERERQARLIERERSLKEEHVDGGYLVTLGTYVGTEDFNKAVVRQLQIERRLAPFWRGLNDFSETWTEYQIVAAARGLPLPAADAIPPDELIPRPISATSPAASTQNIDSLMVPMGGRTQSTASDRSGSGLGSSLPSPTSAPSSKSPFKRSKGIAAALNLSSSRNNSTTDIAAPREIKLPHDPFVNGQPMEVFLYKDGSECPICFLYYPPYLNHTRCCDQPICSECFVQIKRADPHYPDGHGDAQNSERPPEEQAGLLISEPACCPYCQQPELGVTYDPPPFRRGLTYSSPTPHMGTMGTAMSSSSSLNSSLSPSSLASPTSMGHSRRRTQSLSANAPNVVTTDRVRPDWATKLAAQRAHIARRAAAATALHTAAFLMSNNEQQRSLRIGRFSRRNTAERTAPGPSTNAAASNSPARPEAAAAESESASPGTGEARSSSGRGIMGARRSRMEDLEEMMFAEAIRLSLAAEEERKRKAEKEERKEAKRKEKEDKKAAKAAAKSSGSGPYTGSSGNSSIAGSALSLPGLGLGRRRGNSAASNLRMEASVASAVAASGSGSPESATAAGGDKGKGVERPMAANSGDSSEHAEAGASSSMPAGSQPISSPQRPGGHSHLRQISNVSSVSDSSFVDASGGVADEGRTAATGVEPTPNMTSLSEVVDVLDEVDHAKSHDATEVQHLENASDNKPPSKDAGEAPSPPELVVTPGTPALNNEGFETNKQLDIKPTAQHDDQQQQRQQSA</sequence>
<organism>
    <name type="scientific">Pyricularia oryzae (strain 70-15 / ATCC MYA-4617 / FGSC 8958)</name>
    <name type="common">Rice blast fungus</name>
    <name type="synonym">Magnaporthe oryzae</name>
    <dbReference type="NCBI Taxonomy" id="242507"/>
    <lineage>
        <taxon>Eukaryota</taxon>
        <taxon>Fungi</taxon>
        <taxon>Dikarya</taxon>
        <taxon>Ascomycota</taxon>
        <taxon>Pezizomycotina</taxon>
        <taxon>Sordariomycetes</taxon>
        <taxon>Sordariomycetidae</taxon>
        <taxon>Magnaporthales</taxon>
        <taxon>Pyriculariaceae</taxon>
        <taxon>Pyricularia</taxon>
    </lineage>
</organism>
<feature type="chain" id="PRO_0000333437" description="Protein SIP5">
    <location>
        <begin position="1"/>
        <end position="819"/>
    </location>
</feature>
<feature type="region of interest" description="Disordered" evidence="2">
    <location>
        <begin position="1"/>
        <end position="79"/>
    </location>
</feature>
<feature type="region of interest" description="Disordered" evidence="2">
    <location>
        <begin position="190"/>
        <end position="226"/>
    </location>
</feature>
<feature type="region of interest" description="Disordered" evidence="2">
    <location>
        <begin position="367"/>
        <end position="419"/>
    </location>
</feature>
<feature type="region of interest" description="Disordered" evidence="2">
    <location>
        <begin position="468"/>
        <end position="522"/>
    </location>
</feature>
<feature type="region of interest" description="Disordered" evidence="2">
    <location>
        <begin position="549"/>
        <end position="819"/>
    </location>
</feature>
<feature type="compositionally biased region" description="Basic and acidic residues" evidence="2">
    <location>
        <begin position="1"/>
        <end position="11"/>
    </location>
</feature>
<feature type="compositionally biased region" description="Low complexity" evidence="2">
    <location>
        <begin position="28"/>
        <end position="37"/>
    </location>
</feature>
<feature type="compositionally biased region" description="Basic and acidic residues" evidence="2">
    <location>
        <begin position="65"/>
        <end position="79"/>
    </location>
</feature>
<feature type="compositionally biased region" description="Low complexity" evidence="2">
    <location>
        <begin position="210"/>
        <end position="224"/>
    </location>
</feature>
<feature type="compositionally biased region" description="Low complexity" evidence="2">
    <location>
        <begin position="374"/>
        <end position="402"/>
    </location>
</feature>
<feature type="compositionally biased region" description="Polar residues" evidence="2">
    <location>
        <begin position="409"/>
        <end position="419"/>
    </location>
</feature>
<feature type="compositionally biased region" description="Low complexity" evidence="2">
    <location>
        <begin position="479"/>
        <end position="513"/>
    </location>
</feature>
<feature type="compositionally biased region" description="Basic and acidic residues" evidence="2">
    <location>
        <begin position="549"/>
        <end position="573"/>
    </location>
</feature>
<feature type="compositionally biased region" description="Low complexity" evidence="2">
    <location>
        <begin position="575"/>
        <end position="604"/>
    </location>
</feature>
<feature type="compositionally biased region" description="Low complexity" evidence="2">
    <location>
        <begin position="613"/>
        <end position="644"/>
    </location>
</feature>
<feature type="compositionally biased region" description="Polar residues" evidence="2">
    <location>
        <begin position="674"/>
        <end position="685"/>
    </location>
</feature>
<feature type="compositionally biased region" description="Low complexity" evidence="2">
    <location>
        <begin position="697"/>
        <end position="714"/>
    </location>
</feature>
<feature type="compositionally biased region" description="Basic and acidic residues" evidence="2">
    <location>
        <begin position="743"/>
        <end position="772"/>
    </location>
</feature>
<feature type="compositionally biased region" description="Basic and acidic residues" evidence="2">
    <location>
        <begin position="798"/>
        <end position="812"/>
    </location>
</feature>
<proteinExistence type="inferred from homology"/>
<name>SIP5_PYRO7</name>
<dbReference type="EMBL" id="CM001235">
    <property type="protein sequence ID" value="EHA49480.1"/>
    <property type="molecule type" value="Genomic_DNA"/>
</dbReference>
<dbReference type="RefSeq" id="XP_003719064.1">
    <property type="nucleotide sequence ID" value="XM_003719016.1"/>
</dbReference>
<dbReference type="FunCoup" id="A4RGE6">
    <property type="interactions" value="41"/>
</dbReference>
<dbReference type="STRING" id="242507.A4RGE6"/>
<dbReference type="EnsemblFungi" id="MGG_00076T0">
    <property type="protein sequence ID" value="MGG_00076T0"/>
    <property type="gene ID" value="MGG_00076"/>
</dbReference>
<dbReference type="GeneID" id="2675036"/>
<dbReference type="KEGG" id="mgr:MGG_00076"/>
<dbReference type="VEuPathDB" id="FungiDB:MGG_00076"/>
<dbReference type="eggNOG" id="KOG2789">
    <property type="taxonomic scope" value="Eukaryota"/>
</dbReference>
<dbReference type="HOGENOM" id="CLU_009068_1_0_1"/>
<dbReference type="InParanoid" id="A4RGE6"/>
<dbReference type="OMA" id="CFLTYPP"/>
<dbReference type="OrthoDB" id="21471at2759"/>
<dbReference type="Proteomes" id="UP000009058">
    <property type="component" value="Chromosome 5"/>
</dbReference>
<dbReference type="GO" id="GO:0005737">
    <property type="term" value="C:cytoplasm"/>
    <property type="evidence" value="ECO:0007669"/>
    <property type="project" value="UniProtKB-SubCell"/>
</dbReference>
<dbReference type="CDD" id="cd24139">
    <property type="entry name" value="SIP5-like"/>
    <property type="match status" value="1"/>
</dbReference>
<dbReference type="InterPro" id="IPR039301">
    <property type="entry name" value="Sip5/DA2"/>
</dbReference>
<dbReference type="PANTHER" id="PTHR31315">
    <property type="entry name" value="PROTEIN SIP5"/>
    <property type="match status" value="1"/>
</dbReference>
<dbReference type="PANTHER" id="PTHR31315:SF1">
    <property type="entry name" value="PROTEIN SIP5"/>
    <property type="match status" value="1"/>
</dbReference>
<comment type="function">
    <text evidence="1">May negatively regulate the SNF1 kinase.</text>
</comment>
<comment type="subcellular location">
    <subcellularLocation>
        <location evidence="1">Cytoplasm</location>
    </subcellularLocation>
</comment>
<comment type="similarity">
    <text evidence="3">Belongs to the SIP5 family.</text>
</comment>
<gene>
    <name type="primary">SIP5</name>
    <name type="ORF">MGG_00076</name>
</gene>
<keyword id="KW-0963">Cytoplasm</keyword>
<keyword id="KW-1185">Reference proteome</keyword>
<protein>
    <recommendedName>
        <fullName>Protein SIP5</fullName>
    </recommendedName>
</protein>
<reference key="1">
    <citation type="journal article" date="2005" name="Nature">
        <title>The genome sequence of the rice blast fungus Magnaporthe grisea.</title>
        <authorList>
            <person name="Dean R.A."/>
            <person name="Talbot N.J."/>
            <person name="Ebbole D.J."/>
            <person name="Farman M.L."/>
            <person name="Mitchell T.K."/>
            <person name="Orbach M.J."/>
            <person name="Thon M.R."/>
            <person name="Kulkarni R."/>
            <person name="Xu J.-R."/>
            <person name="Pan H."/>
            <person name="Read N.D."/>
            <person name="Lee Y.-H."/>
            <person name="Carbone I."/>
            <person name="Brown D."/>
            <person name="Oh Y.Y."/>
            <person name="Donofrio N."/>
            <person name="Jeong J.S."/>
            <person name="Soanes D.M."/>
            <person name="Djonovic S."/>
            <person name="Kolomiets E."/>
            <person name="Rehmeyer C."/>
            <person name="Li W."/>
            <person name="Harding M."/>
            <person name="Kim S."/>
            <person name="Lebrun M.-H."/>
            <person name="Bohnert H."/>
            <person name="Coughlan S."/>
            <person name="Butler J."/>
            <person name="Calvo S.E."/>
            <person name="Ma L.-J."/>
            <person name="Nicol R."/>
            <person name="Purcell S."/>
            <person name="Nusbaum C."/>
            <person name="Galagan J.E."/>
            <person name="Birren B.W."/>
        </authorList>
    </citation>
    <scope>NUCLEOTIDE SEQUENCE [LARGE SCALE GENOMIC DNA]</scope>
    <source>
        <strain>70-15 / ATCC MYA-4617 / FGSC 8958</strain>
    </source>
</reference>
<evidence type="ECO:0000250" key="1"/>
<evidence type="ECO:0000256" key="2">
    <source>
        <dbReference type="SAM" id="MobiDB-lite"/>
    </source>
</evidence>
<evidence type="ECO:0000305" key="3"/>